<dbReference type="EC" id="3.6.4.-" evidence="1"/>
<dbReference type="EMBL" id="AP011115">
    <property type="protein sequence ID" value="BAH55120.1"/>
    <property type="molecule type" value="Genomic_DNA"/>
</dbReference>
<dbReference type="RefSeq" id="WP_015890550.1">
    <property type="nucleotide sequence ID" value="NC_012522.1"/>
</dbReference>
<dbReference type="SMR" id="C1B4D1"/>
<dbReference type="STRING" id="632772.ROP_68730"/>
<dbReference type="KEGG" id="rop:ROP_68730"/>
<dbReference type="PATRIC" id="fig|632772.20.peg.7163"/>
<dbReference type="HOGENOM" id="CLU_055599_1_0_11"/>
<dbReference type="OrthoDB" id="9804478at2"/>
<dbReference type="Proteomes" id="UP000002212">
    <property type="component" value="Chromosome"/>
</dbReference>
<dbReference type="GO" id="GO:0005737">
    <property type="term" value="C:cytoplasm"/>
    <property type="evidence" value="ECO:0007669"/>
    <property type="project" value="UniProtKB-SubCell"/>
</dbReference>
<dbReference type="GO" id="GO:0048476">
    <property type="term" value="C:Holliday junction resolvase complex"/>
    <property type="evidence" value="ECO:0007669"/>
    <property type="project" value="UniProtKB-UniRule"/>
</dbReference>
<dbReference type="GO" id="GO:0005524">
    <property type="term" value="F:ATP binding"/>
    <property type="evidence" value="ECO:0007669"/>
    <property type="project" value="UniProtKB-UniRule"/>
</dbReference>
<dbReference type="GO" id="GO:0016887">
    <property type="term" value="F:ATP hydrolysis activity"/>
    <property type="evidence" value="ECO:0007669"/>
    <property type="project" value="InterPro"/>
</dbReference>
<dbReference type="GO" id="GO:0000400">
    <property type="term" value="F:four-way junction DNA binding"/>
    <property type="evidence" value="ECO:0007669"/>
    <property type="project" value="UniProtKB-UniRule"/>
</dbReference>
<dbReference type="GO" id="GO:0009378">
    <property type="term" value="F:four-way junction helicase activity"/>
    <property type="evidence" value="ECO:0007669"/>
    <property type="project" value="InterPro"/>
</dbReference>
<dbReference type="GO" id="GO:0006310">
    <property type="term" value="P:DNA recombination"/>
    <property type="evidence" value="ECO:0007669"/>
    <property type="project" value="UniProtKB-UniRule"/>
</dbReference>
<dbReference type="GO" id="GO:0006281">
    <property type="term" value="P:DNA repair"/>
    <property type="evidence" value="ECO:0007669"/>
    <property type="project" value="UniProtKB-UniRule"/>
</dbReference>
<dbReference type="CDD" id="cd00009">
    <property type="entry name" value="AAA"/>
    <property type="match status" value="1"/>
</dbReference>
<dbReference type="Gene3D" id="1.10.8.60">
    <property type="match status" value="1"/>
</dbReference>
<dbReference type="Gene3D" id="3.40.50.300">
    <property type="entry name" value="P-loop containing nucleotide triphosphate hydrolases"/>
    <property type="match status" value="1"/>
</dbReference>
<dbReference type="Gene3D" id="1.10.10.10">
    <property type="entry name" value="Winged helix-like DNA-binding domain superfamily/Winged helix DNA-binding domain"/>
    <property type="match status" value="1"/>
</dbReference>
<dbReference type="HAMAP" id="MF_00016">
    <property type="entry name" value="DNA_HJ_migration_RuvB"/>
    <property type="match status" value="1"/>
</dbReference>
<dbReference type="InterPro" id="IPR003593">
    <property type="entry name" value="AAA+_ATPase"/>
</dbReference>
<dbReference type="InterPro" id="IPR041445">
    <property type="entry name" value="AAA_lid_4"/>
</dbReference>
<dbReference type="InterPro" id="IPR004605">
    <property type="entry name" value="DNA_helicase_Holl-junc_RuvB"/>
</dbReference>
<dbReference type="InterPro" id="IPR027417">
    <property type="entry name" value="P-loop_NTPase"/>
</dbReference>
<dbReference type="InterPro" id="IPR008824">
    <property type="entry name" value="RuvB-like_N"/>
</dbReference>
<dbReference type="InterPro" id="IPR008823">
    <property type="entry name" value="RuvB_C"/>
</dbReference>
<dbReference type="InterPro" id="IPR036388">
    <property type="entry name" value="WH-like_DNA-bd_sf"/>
</dbReference>
<dbReference type="InterPro" id="IPR036390">
    <property type="entry name" value="WH_DNA-bd_sf"/>
</dbReference>
<dbReference type="NCBIfam" id="NF000868">
    <property type="entry name" value="PRK00080.1"/>
    <property type="match status" value="1"/>
</dbReference>
<dbReference type="NCBIfam" id="TIGR00635">
    <property type="entry name" value="ruvB"/>
    <property type="match status" value="1"/>
</dbReference>
<dbReference type="PANTHER" id="PTHR42848">
    <property type="match status" value="1"/>
</dbReference>
<dbReference type="PANTHER" id="PTHR42848:SF1">
    <property type="entry name" value="HOLLIDAY JUNCTION BRANCH MIGRATION COMPLEX SUBUNIT RUVB"/>
    <property type="match status" value="1"/>
</dbReference>
<dbReference type="Pfam" id="PF17864">
    <property type="entry name" value="AAA_lid_4"/>
    <property type="match status" value="1"/>
</dbReference>
<dbReference type="Pfam" id="PF05491">
    <property type="entry name" value="RuvB_C"/>
    <property type="match status" value="1"/>
</dbReference>
<dbReference type="Pfam" id="PF05496">
    <property type="entry name" value="RuvB_N"/>
    <property type="match status" value="1"/>
</dbReference>
<dbReference type="SMART" id="SM00382">
    <property type="entry name" value="AAA"/>
    <property type="match status" value="1"/>
</dbReference>
<dbReference type="SUPFAM" id="SSF52540">
    <property type="entry name" value="P-loop containing nucleoside triphosphate hydrolases"/>
    <property type="match status" value="1"/>
</dbReference>
<dbReference type="SUPFAM" id="SSF46785">
    <property type="entry name" value="Winged helix' DNA-binding domain"/>
    <property type="match status" value="1"/>
</dbReference>
<feature type="chain" id="PRO_1000116652" description="Holliday junction branch migration complex subunit RuvB">
    <location>
        <begin position="1"/>
        <end position="365"/>
    </location>
</feature>
<feature type="region of interest" description="Large ATPase domain (RuvB-L)" evidence="1">
    <location>
        <begin position="1"/>
        <end position="191"/>
    </location>
</feature>
<feature type="region of interest" description="Small ATPAse domain (RuvB-S)" evidence="1">
    <location>
        <begin position="192"/>
        <end position="262"/>
    </location>
</feature>
<feature type="region of interest" description="Head domain (RuvB-H)" evidence="1">
    <location>
        <begin position="265"/>
        <end position="365"/>
    </location>
</feature>
<feature type="binding site" evidence="1">
    <location>
        <position position="30"/>
    </location>
    <ligand>
        <name>ATP</name>
        <dbReference type="ChEBI" id="CHEBI:30616"/>
    </ligand>
</feature>
<feature type="binding site" evidence="1">
    <location>
        <position position="31"/>
    </location>
    <ligand>
        <name>ATP</name>
        <dbReference type="ChEBI" id="CHEBI:30616"/>
    </ligand>
</feature>
<feature type="binding site" evidence="1">
    <location>
        <position position="72"/>
    </location>
    <ligand>
        <name>ATP</name>
        <dbReference type="ChEBI" id="CHEBI:30616"/>
    </ligand>
</feature>
<feature type="binding site" evidence="1">
    <location>
        <position position="75"/>
    </location>
    <ligand>
        <name>ATP</name>
        <dbReference type="ChEBI" id="CHEBI:30616"/>
    </ligand>
</feature>
<feature type="binding site" evidence="1">
    <location>
        <position position="76"/>
    </location>
    <ligand>
        <name>ATP</name>
        <dbReference type="ChEBI" id="CHEBI:30616"/>
    </ligand>
</feature>
<feature type="binding site" evidence="1">
    <location>
        <position position="76"/>
    </location>
    <ligand>
        <name>Mg(2+)</name>
        <dbReference type="ChEBI" id="CHEBI:18420"/>
    </ligand>
</feature>
<feature type="binding site" evidence="1">
    <location>
        <position position="77"/>
    </location>
    <ligand>
        <name>ATP</name>
        <dbReference type="ChEBI" id="CHEBI:30616"/>
    </ligand>
</feature>
<feature type="binding site" evidence="1">
    <location>
        <begin position="138"/>
        <end position="140"/>
    </location>
    <ligand>
        <name>ATP</name>
        <dbReference type="ChEBI" id="CHEBI:30616"/>
    </ligand>
</feature>
<feature type="binding site" evidence="1">
    <location>
        <position position="181"/>
    </location>
    <ligand>
        <name>ATP</name>
        <dbReference type="ChEBI" id="CHEBI:30616"/>
    </ligand>
</feature>
<feature type="binding site" evidence="1">
    <location>
        <position position="191"/>
    </location>
    <ligand>
        <name>ATP</name>
        <dbReference type="ChEBI" id="CHEBI:30616"/>
    </ligand>
</feature>
<feature type="binding site" evidence="1">
    <location>
        <position position="228"/>
    </location>
    <ligand>
        <name>ATP</name>
        <dbReference type="ChEBI" id="CHEBI:30616"/>
    </ligand>
</feature>
<feature type="binding site" evidence="1">
    <location>
        <position position="320"/>
    </location>
    <ligand>
        <name>DNA</name>
        <dbReference type="ChEBI" id="CHEBI:16991"/>
    </ligand>
</feature>
<feature type="binding site" evidence="1">
    <location>
        <position position="325"/>
    </location>
    <ligand>
        <name>DNA</name>
        <dbReference type="ChEBI" id="CHEBI:16991"/>
    </ligand>
</feature>
<accession>C1B4D1</accession>
<evidence type="ECO:0000255" key="1">
    <source>
        <dbReference type="HAMAP-Rule" id="MF_00016"/>
    </source>
</evidence>
<name>RUVB_RHOOB</name>
<protein>
    <recommendedName>
        <fullName evidence="1">Holliday junction branch migration complex subunit RuvB</fullName>
        <ecNumber evidence="1">3.6.4.-</ecNumber>
    </recommendedName>
</protein>
<proteinExistence type="inferred from homology"/>
<organism>
    <name type="scientific">Rhodococcus opacus (strain B4)</name>
    <dbReference type="NCBI Taxonomy" id="632772"/>
    <lineage>
        <taxon>Bacteria</taxon>
        <taxon>Bacillati</taxon>
        <taxon>Actinomycetota</taxon>
        <taxon>Actinomycetes</taxon>
        <taxon>Mycobacteriales</taxon>
        <taxon>Nocardiaceae</taxon>
        <taxon>Rhodococcus</taxon>
    </lineage>
</organism>
<comment type="function">
    <text evidence="1">The RuvA-RuvB-RuvC complex processes Holliday junction (HJ) DNA during genetic recombination and DNA repair, while the RuvA-RuvB complex plays an important role in the rescue of blocked DNA replication forks via replication fork reversal (RFR). RuvA specifically binds to HJ cruciform DNA, conferring on it an open structure. The RuvB hexamer acts as an ATP-dependent pump, pulling dsDNA into and through the RuvAB complex. RuvB forms 2 homohexamers on either side of HJ DNA bound by 1 or 2 RuvA tetramers; 4 subunits per hexamer contact DNA at a time. Coordinated motions by a converter formed by DNA-disengaged RuvB subunits stimulates ATP hydrolysis and nucleotide exchange. Immobilization of the converter enables RuvB to convert the ATP-contained energy into a lever motion, pulling 2 nucleotides of DNA out of the RuvA tetramer per ATP hydrolyzed, thus driving DNA branch migration. The RuvB motors rotate together with the DNA substrate, which together with the progressing nucleotide cycle form the mechanistic basis for DNA recombination by continuous HJ branch migration. Branch migration allows RuvC to scan DNA until it finds its consensus sequence, where it cleaves and resolves cruciform DNA.</text>
</comment>
<comment type="catalytic activity">
    <reaction evidence="1">
        <text>ATP + H2O = ADP + phosphate + H(+)</text>
        <dbReference type="Rhea" id="RHEA:13065"/>
        <dbReference type="ChEBI" id="CHEBI:15377"/>
        <dbReference type="ChEBI" id="CHEBI:15378"/>
        <dbReference type="ChEBI" id="CHEBI:30616"/>
        <dbReference type="ChEBI" id="CHEBI:43474"/>
        <dbReference type="ChEBI" id="CHEBI:456216"/>
    </reaction>
</comment>
<comment type="subunit">
    <text evidence="1">Homohexamer. Forms an RuvA(8)-RuvB(12)-Holliday junction (HJ) complex. HJ DNA is sandwiched between 2 RuvA tetramers; dsDNA enters through RuvA and exits via RuvB. An RuvB hexamer assembles on each DNA strand where it exits the tetramer. Each RuvB hexamer is contacted by two RuvA subunits (via domain III) on 2 adjacent RuvB subunits; this complex drives branch migration. In the full resolvosome a probable DNA-RuvA(4)-RuvB(12)-RuvC(2) complex forms which resolves the HJ.</text>
</comment>
<comment type="subcellular location">
    <subcellularLocation>
        <location evidence="1">Cytoplasm</location>
    </subcellularLocation>
</comment>
<comment type="domain">
    <text evidence="1">Has 3 domains, the large (RuvB-L) and small ATPase (RuvB-S) domains and the C-terminal head (RuvB-H) domain. The head domain binds DNA, while the ATPase domains jointly bind ATP, ADP or are empty depending on the state of the subunit in the translocation cycle. During a single DNA translocation step the structure of each domain remains the same, but their relative positions change.</text>
</comment>
<comment type="similarity">
    <text evidence="1">Belongs to the RuvB family.</text>
</comment>
<reference key="1">
    <citation type="submission" date="2009-03" db="EMBL/GenBank/DDBJ databases">
        <title>Comparison of the complete genome sequences of Rhodococcus erythropolis PR4 and Rhodococcus opacus B4.</title>
        <authorList>
            <person name="Takarada H."/>
            <person name="Sekine M."/>
            <person name="Hosoyama A."/>
            <person name="Yamada R."/>
            <person name="Fujisawa T."/>
            <person name="Omata S."/>
            <person name="Shimizu A."/>
            <person name="Tsukatani N."/>
            <person name="Tanikawa S."/>
            <person name="Fujita N."/>
            <person name="Harayama S."/>
        </authorList>
    </citation>
    <scope>NUCLEOTIDE SEQUENCE [LARGE SCALE GENOMIC DNA]</scope>
    <source>
        <strain>B4</strain>
    </source>
</reference>
<keyword id="KW-0067">ATP-binding</keyword>
<keyword id="KW-0963">Cytoplasm</keyword>
<keyword id="KW-0227">DNA damage</keyword>
<keyword id="KW-0233">DNA recombination</keyword>
<keyword id="KW-0234">DNA repair</keyword>
<keyword id="KW-0238">DNA-binding</keyword>
<keyword id="KW-0378">Hydrolase</keyword>
<keyword id="KW-0547">Nucleotide-binding</keyword>
<gene>
    <name evidence="1" type="primary">ruvB</name>
    <name type="ordered locus">ROP_68730</name>
</gene>
<sequence>MSPELGGGYDGESPVSADLVAGDGDIEASLRPKNLHDFIGQPRVREQLQLVLTGAKMRGGTPDHILLSGPPGLGKTSMAMIIAAELGSSLRLTSGPALERAGDLAAMLSNLVEGDVLFIDEIHRIARPAEEMLYLAMEDFRVDVVVGKGPGATSIPLEVAPFTLVGATTRSGALTGPLRDRFGFTAHMDFYEPAELKQILMRSAGILGVQLGEEAGAEIASRSRGTPRIANRLLRRVRDYAEVRADGVVTREIAHAALAVYDVDQLGLDRLDRSVLSALVRSFGGGPVGVSTLAVAVGEEPATVEEVCEPFLVRAGMIARTPRGRVATAAAWTQLGLTPPPDAVTGGIDVRVNEPQASLFDPEDP</sequence>